<sequence length="827" mass="92195">MARWSGQIMCFRVGHFLLVGHFLLVGNFLLTDDSDTFSFVALGGGREVGRSCHVISFKGKTIMLDAGVHPAHSGLASLPFYDEFDLSTIDILLISHFHLDHAASLPYVMQKTNFKGRVFMTHPTKGIYRWLLSDFVRVTSGAESDPDLYSEADLTASFNKIETIDYHSTMEVNGVKFTAYHAGHVLGAAMYTIEVGGVKVLFTGDYSREEDRHLNQAEVPPMKPDILICESTYGTGTHLPRLEREQRLTGLIHSTLDKGGKCLLPVFALGRAQEILLILDEYWEAHPDLQEFSIYYASALAKKCIAVYQTYINMMNDNIRRRFRDQKTNPFRFKYIKNIKNLDRFDDMGPCVMVASPGMLQSGVSRSLLERWAPDPKNTLILTGYSVEGTMAKQIINEPNEIPSAQNPDLKVPRRLAVEELSFAAHVDFQQNSEFIDLVDSKNIILVHGELNNMQRLKAALLAKYRGLKNSPREKTIYNPRNCEEVELAFKGVKVAKTVGKMAEEKPHVGQIISGVVVQKDFNYGLMGVADLREHVGLSTSSVLERQTVTVNAGVDLVKYHLEQMFGYVEMRETENVKIEEMEDDVAEEEEDKEVKQEVEDVTMEGEVKDETAEEVKKEEEVAEEFKQEVEGDSDTSAGTTFVVMNSVTVKHTPTSCTIEWVGSCLNDSIADAVLAILLTVDNSRASVKMSSKQCAHSHGHEDGHSNSSLDERVLQLSSILKAQFGDSYIVSEDGKSANIKIDAMEATISFSDLSVTGSPPPLVQRVQVAVDRAISLVAPLAQKLSAVDLVEGFKAIENVKDREENGEVKAEDEEKVKAEEKVKEEE</sequence>
<name>YSH1_YARLI</name>
<feature type="chain" id="PRO_0000238908" description="Endoribonuclease YSH1">
    <location>
        <begin position="1"/>
        <end position="827"/>
    </location>
</feature>
<feature type="region of interest" description="Disordered" evidence="3">
    <location>
        <begin position="583"/>
        <end position="621"/>
    </location>
</feature>
<feature type="region of interest" description="Disordered" evidence="3">
    <location>
        <begin position="802"/>
        <end position="827"/>
    </location>
</feature>
<feature type="compositionally biased region" description="Acidic residues" evidence="3">
    <location>
        <begin position="583"/>
        <end position="592"/>
    </location>
</feature>
<feature type="compositionally biased region" description="Basic and acidic residues" evidence="3">
    <location>
        <begin position="606"/>
        <end position="621"/>
    </location>
</feature>
<feature type="active site" description="Proton donor" evidence="2">
    <location>
        <position position="426"/>
    </location>
</feature>
<feature type="binding site" evidence="1">
    <location>
        <position position="96"/>
    </location>
    <ligand>
        <name>Zn(2+)</name>
        <dbReference type="ChEBI" id="CHEBI:29105"/>
        <label>1</label>
    </ligand>
</feature>
<feature type="binding site" evidence="1">
    <location>
        <position position="98"/>
    </location>
    <ligand>
        <name>Zn(2+)</name>
        <dbReference type="ChEBI" id="CHEBI:29105"/>
        <label>1</label>
    </ligand>
</feature>
<feature type="binding site" evidence="1">
    <location>
        <position position="100"/>
    </location>
    <ligand>
        <name>Zn(2+)</name>
        <dbReference type="ChEBI" id="CHEBI:29105"/>
        <label>2</label>
    </ligand>
</feature>
<feature type="binding site" evidence="1">
    <location>
        <position position="101"/>
    </location>
    <ligand>
        <name>Zn(2+)</name>
        <dbReference type="ChEBI" id="CHEBI:29105"/>
        <label>2</label>
    </ligand>
</feature>
<feature type="binding site" evidence="1">
    <location>
        <position position="184"/>
    </location>
    <ligand>
        <name>Zn(2+)</name>
        <dbReference type="ChEBI" id="CHEBI:29105"/>
        <label>1</label>
    </ligand>
</feature>
<feature type="binding site" evidence="1">
    <location>
        <position position="205"/>
    </location>
    <ligand>
        <name>Zn(2+)</name>
        <dbReference type="ChEBI" id="CHEBI:29105"/>
        <label>1</label>
    </ligand>
</feature>
<feature type="binding site" evidence="1">
    <location>
        <position position="205"/>
    </location>
    <ligand>
        <name>Zn(2+)</name>
        <dbReference type="ChEBI" id="CHEBI:29105"/>
        <label>2</label>
    </ligand>
</feature>
<feature type="binding site" evidence="1">
    <location>
        <position position="448"/>
    </location>
    <ligand>
        <name>Zn(2+)</name>
        <dbReference type="ChEBI" id="CHEBI:29105"/>
        <label>2</label>
    </ligand>
</feature>
<dbReference type="EC" id="3.1.27.-"/>
<dbReference type="EMBL" id="CR382132">
    <property type="protein sequence ID" value="CAG77772.2"/>
    <property type="molecule type" value="Genomic_DNA"/>
</dbReference>
<dbReference type="RefSeq" id="XP_504965.2">
    <property type="nucleotide sequence ID" value="XM_504965.2"/>
</dbReference>
<dbReference type="SMR" id="Q6C2Z7"/>
<dbReference type="FunCoup" id="Q6C2Z7">
    <property type="interactions" value="986"/>
</dbReference>
<dbReference type="STRING" id="284591.Q6C2Z7"/>
<dbReference type="EnsemblFungi" id="CAG77772">
    <property type="protein sequence ID" value="CAG77772"/>
    <property type="gene ID" value="YALI0_F03817g"/>
</dbReference>
<dbReference type="VEuPathDB" id="FungiDB:YALI0_F03817g"/>
<dbReference type="HOGENOM" id="CLU_009673_2_3_1"/>
<dbReference type="InParanoid" id="Q6C2Z7"/>
<dbReference type="OMA" id="CKQHITL"/>
<dbReference type="OrthoDB" id="827at4891"/>
<dbReference type="Proteomes" id="UP000001300">
    <property type="component" value="Chromosome F"/>
</dbReference>
<dbReference type="GO" id="GO:0005847">
    <property type="term" value="C:mRNA cleavage and polyadenylation specificity factor complex"/>
    <property type="evidence" value="ECO:0000318"/>
    <property type="project" value="GO_Central"/>
</dbReference>
<dbReference type="GO" id="GO:0004534">
    <property type="term" value="F:5'-3' RNA exonuclease activity"/>
    <property type="evidence" value="ECO:0000318"/>
    <property type="project" value="GO_Central"/>
</dbReference>
<dbReference type="GO" id="GO:0046872">
    <property type="term" value="F:metal ion binding"/>
    <property type="evidence" value="ECO:0007669"/>
    <property type="project" value="UniProtKB-KW"/>
</dbReference>
<dbReference type="GO" id="GO:0003723">
    <property type="term" value="F:RNA binding"/>
    <property type="evidence" value="ECO:0000318"/>
    <property type="project" value="GO_Central"/>
</dbReference>
<dbReference type="GO" id="GO:0004521">
    <property type="term" value="F:RNA endonuclease activity"/>
    <property type="evidence" value="ECO:0000318"/>
    <property type="project" value="GO_Central"/>
</dbReference>
<dbReference type="GO" id="GO:0006397">
    <property type="term" value="P:mRNA processing"/>
    <property type="evidence" value="ECO:0007669"/>
    <property type="project" value="UniProtKB-KW"/>
</dbReference>
<dbReference type="CDD" id="cd16292">
    <property type="entry name" value="CPSF3-like_MBL-fold"/>
    <property type="match status" value="1"/>
</dbReference>
<dbReference type="FunFam" id="3.60.15.10:FF:000001">
    <property type="entry name" value="Cleavage and polyadenylation specificity factor"/>
    <property type="match status" value="1"/>
</dbReference>
<dbReference type="FunFam" id="3.40.50.10890:FF:000001">
    <property type="entry name" value="Cleavage and polyadenylation specificity factor subunit 3"/>
    <property type="match status" value="1"/>
</dbReference>
<dbReference type="Gene3D" id="3.40.50.10890">
    <property type="match status" value="1"/>
</dbReference>
<dbReference type="Gene3D" id="3.60.15.10">
    <property type="entry name" value="Ribonuclease Z/Hydroxyacylglutathione hydrolase-like"/>
    <property type="match status" value="1"/>
</dbReference>
<dbReference type="InterPro" id="IPR022712">
    <property type="entry name" value="Beta_Casp"/>
</dbReference>
<dbReference type="InterPro" id="IPR021718">
    <property type="entry name" value="CPSF73-100_C"/>
</dbReference>
<dbReference type="InterPro" id="IPR050698">
    <property type="entry name" value="MBL"/>
</dbReference>
<dbReference type="InterPro" id="IPR001279">
    <property type="entry name" value="Metallo-B-lactamas"/>
</dbReference>
<dbReference type="InterPro" id="IPR036866">
    <property type="entry name" value="RibonucZ/Hydroxyglut_hydro"/>
</dbReference>
<dbReference type="InterPro" id="IPR011108">
    <property type="entry name" value="RMMBL"/>
</dbReference>
<dbReference type="PANTHER" id="PTHR11203">
    <property type="entry name" value="CLEAVAGE AND POLYADENYLATION SPECIFICITY FACTOR FAMILY MEMBER"/>
    <property type="match status" value="1"/>
</dbReference>
<dbReference type="PANTHER" id="PTHR11203:SF11">
    <property type="entry name" value="CLEAVAGE AND POLYADENYLATION SPECIFICITY FACTOR SUBUNIT 3"/>
    <property type="match status" value="1"/>
</dbReference>
<dbReference type="Pfam" id="PF10996">
    <property type="entry name" value="Beta-Casp"/>
    <property type="match status" value="1"/>
</dbReference>
<dbReference type="Pfam" id="PF11718">
    <property type="entry name" value="CPSF73-100_C"/>
    <property type="match status" value="1"/>
</dbReference>
<dbReference type="Pfam" id="PF16661">
    <property type="entry name" value="Lactamase_B_6"/>
    <property type="match status" value="1"/>
</dbReference>
<dbReference type="Pfam" id="PF07521">
    <property type="entry name" value="RMMBL"/>
    <property type="match status" value="1"/>
</dbReference>
<dbReference type="SMART" id="SM01027">
    <property type="entry name" value="Beta-Casp"/>
    <property type="match status" value="1"/>
</dbReference>
<dbReference type="SMART" id="SM01098">
    <property type="entry name" value="CPSF73-100_C"/>
    <property type="match status" value="1"/>
</dbReference>
<dbReference type="SMART" id="SM00849">
    <property type="entry name" value="Lactamase_B"/>
    <property type="match status" value="1"/>
</dbReference>
<dbReference type="SUPFAM" id="SSF56281">
    <property type="entry name" value="Metallo-hydrolase/oxidoreductase"/>
    <property type="match status" value="1"/>
</dbReference>
<gene>
    <name type="primary">YSH1</name>
    <name type="ordered locus">YALI0F03817g</name>
</gene>
<organism>
    <name type="scientific">Yarrowia lipolytica (strain CLIB 122 / E 150)</name>
    <name type="common">Yeast</name>
    <name type="synonym">Candida lipolytica</name>
    <dbReference type="NCBI Taxonomy" id="284591"/>
    <lineage>
        <taxon>Eukaryota</taxon>
        <taxon>Fungi</taxon>
        <taxon>Dikarya</taxon>
        <taxon>Ascomycota</taxon>
        <taxon>Saccharomycotina</taxon>
        <taxon>Dipodascomycetes</taxon>
        <taxon>Dipodascales</taxon>
        <taxon>Dipodascales incertae sedis</taxon>
        <taxon>Yarrowia</taxon>
    </lineage>
</organism>
<keyword id="KW-0255">Endonuclease</keyword>
<keyword id="KW-0378">Hydrolase</keyword>
<keyword id="KW-0479">Metal-binding</keyword>
<keyword id="KW-0507">mRNA processing</keyword>
<keyword id="KW-0540">Nuclease</keyword>
<keyword id="KW-0539">Nucleus</keyword>
<keyword id="KW-1185">Reference proteome</keyword>
<keyword id="KW-0862">Zinc</keyword>
<evidence type="ECO:0000250" key="1"/>
<evidence type="ECO:0000255" key="2"/>
<evidence type="ECO:0000256" key="3">
    <source>
        <dbReference type="SAM" id="MobiDB-lite"/>
    </source>
</evidence>
<evidence type="ECO:0000305" key="4"/>
<proteinExistence type="inferred from homology"/>
<accession>Q6C2Z7</accession>
<comment type="function">
    <text evidence="1">Component of the cleavage factor I (CF I) involved in pre-mRNA 3'-end processing.</text>
</comment>
<comment type="subcellular location">
    <subcellularLocation>
        <location evidence="1">Nucleus</location>
    </subcellularLocation>
</comment>
<comment type="similarity">
    <text evidence="4">Belongs to the metallo-beta-lactamase superfamily. RNA-metabolizing metallo-beta-lactamase-like family. CPSF2/YSH1 subfamily.</text>
</comment>
<protein>
    <recommendedName>
        <fullName>Endoribonuclease YSH1</fullName>
        <ecNumber>3.1.27.-</ecNumber>
    </recommendedName>
    <alternativeName>
        <fullName>mRNA 3'-end-processing protein YSH1</fullName>
    </alternativeName>
</protein>
<reference key="1">
    <citation type="journal article" date="2004" name="Nature">
        <title>Genome evolution in yeasts.</title>
        <authorList>
            <person name="Dujon B."/>
            <person name="Sherman D."/>
            <person name="Fischer G."/>
            <person name="Durrens P."/>
            <person name="Casaregola S."/>
            <person name="Lafontaine I."/>
            <person name="de Montigny J."/>
            <person name="Marck C."/>
            <person name="Neuveglise C."/>
            <person name="Talla E."/>
            <person name="Goffard N."/>
            <person name="Frangeul L."/>
            <person name="Aigle M."/>
            <person name="Anthouard V."/>
            <person name="Babour A."/>
            <person name="Barbe V."/>
            <person name="Barnay S."/>
            <person name="Blanchin S."/>
            <person name="Beckerich J.-M."/>
            <person name="Beyne E."/>
            <person name="Bleykasten C."/>
            <person name="Boisrame A."/>
            <person name="Boyer J."/>
            <person name="Cattolico L."/>
            <person name="Confanioleri F."/>
            <person name="de Daruvar A."/>
            <person name="Despons L."/>
            <person name="Fabre E."/>
            <person name="Fairhead C."/>
            <person name="Ferry-Dumazet H."/>
            <person name="Groppi A."/>
            <person name="Hantraye F."/>
            <person name="Hennequin C."/>
            <person name="Jauniaux N."/>
            <person name="Joyet P."/>
            <person name="Kachouri R."/>
            <person name="Kerrest A."/>
            <person name="Koszul R."/>
            <person name="Lemaire M."/>
            <person name="Lesur I."/>
            <person name="Ma L."/>
            <person name="Muller H."/>
            <person name="Nicaud J.-M."/>
            <person name="Nikolski M."/>
            <person name="Oztas S."/>
            <person name="Ozier-Kalogeropoulos O."/>
            <person name="Pellenz S."/>
            <person name="Potier S."/>
            <person name="Richard G.-F."/>
            <person name="Straub M.-L."/>
            <person name="Suleau A."/>
            <person name="Swennen D."/>
            <person name="Tekaia F."/>
            <person name="Wesolowski-Louvel M."/>
            <person name="Westhof E."/>
            <person name="Wirth B."/>
            <person name="Zeniou-Meyer M."/>
            <person name="Zivanovic Y."/>
            <person name="Bolotin-Fukuhara M."/>
            <person name="Thierry A."/>
            <person name="Bouchier C."/>
            <person name="Caudron B."/>
            <person name="Scarpelli C."/>
            <person name="Gaillardin C."/>
            <person name="Weissenbach J."/>
            <person name="Wincker P."/>
            <person name="Souciet J.-L."/>
        </authorList>
    </citation>
    <scope>NUCLEOTIDE SEQUENCE [LARGE SCALE GENOMIC DNA]</scope>
    <source>
        <strain>CLIB 122 / E 150</strain>
    </source>
</reference>